<organism>
    <name type="scientific">Mus musculus</name>
    <name type="common">Mouse</name>
    <dbReference type="NCBI Taxonomy" id="10090"/>
    <lineage>
        <taxon>Eukaryota</taxon>
        <taxon>Metazoa</taxon>
        <taxon>Chordata</taxon>
        <taxon>Craniata</taxon>
        <taxon>Vertebrata</taxon>
        <taxon>Euteleostomi</taxon>
        <taxon>Mammalia</taxon>
        <taxon>Eutheria</taxon>
        <taxon>Euarchontoglires</taxon>
        <taxon>Glires</taxon>
        <taxon>Rodentia</taxon>
        <taxon>Myomorpha</taxon>
        <taxon>Muroidea</taxon>
        <taxon>Muridae</taxon>
        <taxon>Murinae</taxon>
        <taxon>Mus</taxon>
        <taxon>Mus</taxon>
    </lineage>
</organism>
<sequence length="963" mass="109551">MADPAECNIKVMCRFRPLNESEVNRGDKYVAKFQGEDTVMIASKPYAFDRVFQSSTSQEQVYNDCAKKIVKDVLEGYNGTIFAYGQTSSGKTHTMEGKLHDPEGMGIIPRIVQDIFNYIYSMDENLEFHIKVSYFEIYLDKIRDLLDVSKTNLSVHEDKNRVPYVKGCTERFVCSPDEVMDTIDEGKSNRHVAVTNMNEHSSRSHSIFLINVKQENTQTEQKLSGKLYLVDLAGSEKVSKTGAEGAVLDEAKNINKSLSALGNVISALAEGSTYVPYRDSKMTRILQDSLGGNCRTTIVICCSPSSYNESETKSTLLFGQRAKTIKNTVCVNVELTAEQWKKKYEKEKEKNKTLRNTIQWLENELNRWRNGETVPIDEQFDKEKANLEAFTADKDIAITSDKPAAAVGMAGSFTDAERRKCEEELAKLYKQLDDKDEEINQQSQLVEKLKTQMLDQEELLASTRRDQDNMQAELNRLQAENDASKEEVKEVLQALEELAVNYDQKSQEVEDKTKEYELLSDELNQKSATLASIDAELQKLKEMTNHQKKRAAEMMASLLKDLAEIGIAVGNNDVKQPEGTGMIDEEFTVARLYISKMKSEVKTMVKRCKQLESTQTESNKKMEENEKELAACQLRISQHEAKIKSLTEYLQNVEQKKRQLEESVDSLGEELVQLRAQEKVHEMEKEHLNKVQTANEVKQAVEQQIQSHRETHQKQISSLRDEVEAKEKLITDLQDQNQKMVLEQERLRVEHERLKATDQEKSRKLHELTVMQDRREQARQDLKGLEETVAKELQTLHNLRKLFVQDLATRVKKSAEVDSDDTGGSAAQKQKISFLENNLEQLTKVHKQLVRDNADLRCELPKLEKRLRATAERVKALESALKEAKENASRDRKRYQQEVDRIKEAVRSKNMARRGHSAQIAKPIRPGQHPAASPTHPGTVRGGGSFVQNNQPVGLRGGGGKQS</sequence>
<protein>
    <recommendedName>
        <fullName>Kinesin-1 heavy chain</fullName>
    </recommendedName>
    <alternativeName>
        <fullName>Conventional kinesin heavy chain</fullName>
    </alternativeName>
    <alternativeName>
        <fullName>Ubiquitous kinesin heavy chain</fullName>
        <shortName>UKHC</shortName>
    </alternativeName>
</protein>
<proteinExistence type="evidence at protein level"/>
<feature type="initiator methionine" description="Removed" evidence="1">
    <location>
        <position position="1"/>
    </location>
</feature>
<feature type="chain" id="PRO_0000125352" description="Kinesin-1 heavy chain">
    <location>
        <begin position="2"/>
        <end position="963"/>
    </location>
</feature>
<feature type="domain" description="Kinesin motor" evidence="3">
    <location>
        <begin position="8"/>
        <end position="325"/>
    </location>
</feature>
<feature type="region of interest" description="Disordered" evidence="4">
    <location>
        <begin position="908"/>
        <end position="963"/>
    </location>
</feature>
<feature type="region of interest" description="Globular">
    <location>
        <begin position="915"/>
        <end position="963"/>
    </location>
</feature>
<feature type="coiled-coil region">
    <location>
        <begin position="329"/>
        <end position="914"/>
    </location>
</feature>
<feature type="binding site" evidence="3">
    <location>
        <begin position="85"/>
        <end position="92"/>
    </location>
    <ligand>
        <name>ATP</name>
        <dbReference type="ChEBI" id="CHEBI:30616"/>
    </ligand>
</feature>
<feature type="modified residue" description="N-acetylalanine" evidence="1">
    <location>
        <position position="2"/>
    </location>
</feature>
<feature type="modified residue" description="Phosphoserine" evidence="1">
    <location>
        <position position="933"/>
    </location>
</feature>
<feature type="modified residue" description="Phosphoserine" evidence="11 12">
    <location>
        <position position="945"/>
    </location>
</feature>
<feature type="modified residue" description="Omega-N-methylarginine" evidence="13">
    <location>
        <position position="956"/>
    </location>
</feature>
<feature type="cross-link" description="Glycyl lysine isopeptide (Lys-Gly) (interchain with G-Cter in SUMO2)" evidence="1">
    <location>
        <position position="213"/>
    </location>
</feature>
<feature type="sequence conflict" description="In Ref. 3; AAA20133." evidence="10" ref="3">
    <original>ES</original>
    <variation>AT</variation>
    <location>
        <begin position="20"/>
        <end position="21"/>
    </location>
</feature>
<feature type="sequence conflict" description="In Ref. 1; AAB53940." evidence="10" ref="1">
    <original>M</original>
    <variation>V</variation>
    <location>
        <position position="40"/>
    </location>
</feature>
<feature type="sequence conflict" description="In Ref. 3; AAA20133." evidence="10" ref="3">
    <original>E</original>
    <variation>G</variation>
    <location>
        <position position="75"/>
    </location>
</feature>
<feature type="sequence conflict" description="In Ref. 3; AAA20133." evidence="10" ref="3">
    <original>H</original>
    <variation>D</variation>
    <location>
        <position position="191"/>
    </location>
</feature>
<feature type="sequence conflict" description="In Ref. 3; AAA20133." evidence="10" ref="3">
    <original>N</original>
    <variation>K</variation>
    <location>
        <position position="255"/>
    </location>
</feature>
<feature type="sequence conflict" description="In Ref. 3; AAA20133." evidence="10" ref="3">
    <original>I</original>
    <variation>T</variation>
    <location>
        <position position="396"/>
    </location>
</feature>
<feature type="sequence conflict" description="In Ref. 1; AAB53940." evidence="10" ref="1">
    <original>P</original>
    <variation>G</variation>
    <location>
        <position position="403"/>
    </location>
</feature>
<feature type="sequence conflict" description="In Ref. 3; AAA20132." evidence="10" ref="3">
    <original>T</original>
    <variation>I</variation>
    <location>
        <position position="451"/>
    </location>
</feature>
<feature type="sequence conflict" description="In Ref. 1; AAB53940." evidence="10" ref="1">
    <original>S</original>
    <variation>T</variation>
    <location>
        <position position="520"/>
    </location>
</feature>
<feature type="sequence conflict" description="In Ref. 1; AAB53940." evidence="10" ref="1">
    <original>L</original>
    <variation>F</variation>
    <location>
        <position position="523"/>
    </location>
</feature>
<feature type="sequence conflict" description="In Ref. 1; AAB53940." evidence="10" ref="1">
    <original>V</original>
    <variation>D</variation>
    <location>
        <position position="653"/>
    </location>
</feature>
<feature type="sequence conflict" description="In Ref. 1; AAB53940." evidence="10" ref="1">
    <original>V</original>
    <variation>L</variation>
    <location>
        <position position="664"/>
    </location>
</feature>
<feature type="sequence conflict" description="In Ref. 1; AAB53940." evidence="10" ref="1">
    <original>Q</original>
    <variation>T</variation>
    <location>
        <position position="744"/>
    </location>
</feature>
<feature type="sequence conflict" description="In Ref. 3; AAA20133." evidence="10" ref="3">
    <original>S</original>
    <variation>R</variation>
    <location>
        <position position="814"/>
    </location>
</feature>
<feature type="sequence conflict" description="In Ref. 1; AAB53940." evidence="10" ref="1">
    <original>K</original>
    <variation>F</variation>
    <location>
        <position position="865"/>
    </location>
</feature>
<feature type="sequence conflict" description="In Ref. 3; AAA20133." evidence="10" ref="3">
    <original>L</original>
    <variation>R</variation>
    <location>
        <position position="881"/>
    </location>
</feature>
<feature type="helix" evidence="14">
    <location>
        <begin position="447"/>
        <end position="558"/>
    </location>
</feature>
<name>KINH_MOUSE</name>
<evidence type="ECO:0000250" key="1">
    <source>
        <dbReference type="UniProtKB" id="P33176"/>
    </source>
</evidence>
<evidence type="ECO:0000250" key="2">
    <source>
        <dbReference type="UniProtKB" id="Q2PQA9"/>
    </source>
</evidence>
<evidence type="ECO:0000255" key="3">
    <source>
        <dbReference type="PROSITE-ProRule" id="PRU00283"/>
    </source>
</evidence>
<evidence type="ECO:0000256" key="4">
    <source>
        <dbReference type="SAM" id="MobiDB-lite"/>
    </source>
</evidence>
<evidence type="ECO:0000269" key="5">
    <source>
    </source>
</evidence>
<evidence type="ECO:0000269" key="6">
    <source>
    </source>
</evidence>
<evidence type="ECO:0000269" key="7">
    <source>
    </source>
</evidence>
<evidence type="ECO:0000269" key="8">
    <source>
    </source>
</evidence>
<evidence type="ECO:0000269" key="9">
    <source>
    </source>
</evidence>
<evidence type="ECO:0000305" key="10"/>
<evidence type="ECO:0007744" key="11">
    <source>
    </source>
</evidence>
<evidence type="ECO:0007744" key="12">
    <source>
    </source>
</evidence>
<evidence type="ECO:0007744" key="13">
    <source>
    </source>
</evidence>
<evidence type="ECO:0007829" key="14">
    <source>
        <dbReference type="PDB" id="6IGV"/>
    </source>
</evidence>
<dbReference type="EMBL" id="U86090">
    <property type="protein sequence ID" value="AAB53940.1"/>
    <property type="molecule type" value="mRNA"/>
</dbReference>
<dbReference type="EMBL" id="BC090841">
    <property type="protein sequence ID" value="AAH90841.1"/>
    <property type="molecule type" value="mRNA"/>
</dbReference>
<dbReference type="EMBL" id="L27153">
    <property type="protein sequence ID" value="AAA20133.1"/>
    <property type="molecule type" value="mRNA"/>
</dbReference>
<dbReference type="EMBL" id="L29223">
    <property type="protein sequence ID" value="AAA20132.2"/>
    <property type="molecule type" value="mRNA"/>
</dbReference>
<dbReference type="CCDS" id="CCDS37724.1"/>
<dbReference type="PIR" id="I84737">
    <property type="entry name" value="I84737"/>
</dbReference>
<dbReference type="RefSeq" id="NP_032474.2">
    <property type="nucleotide sequence ID" value="NM_008448.3"/>
</dbReference>
<dbReference type="PDB" id="6IGN">
    <property type="method" value="X-ray"/>
    <property type="resolution" value="3.45 A"/>
    <property type="chains" value="A=444-566"/>
</dbReference>
<dbReference type="PDB" id="6IGV">
    <property type="method" value="X-ray"/>
    <property type="resolution" value="3.00 A"/>
    <property type="chains" value="A=446-563"/>
</dbReference>
<dbReference type="PDBsum" id="6IGN"/>
<dbReference type="PDBsum" id="6IGV"/>
<dbReference type="SMR" id="Q61768"/>
<dbReference type="BioGRID" id="200946">
    <property type="interactions" value="49"/>
</dbReference>
<dbReference type="CORUM" id="Q61768"/>
<dbReference type="DIP" id="DIP-32053N"/>
<dbReference type="FunCoup" id="Q61768">
    <property type="interactions" value="3494"/>
</dbReference>
<dbReference type="IntAct" id="Q61768">
    <property type="interactions" value="33"/>
</dbReference>
<dbReference type="MINT" id="Q61768"/>
<dbReference type="STRING" id="10090.ENSMUSP00000025083"/>
<dbReference type="GlyGen" id="Q61768">
    <property type="glycosylation" value="2 sites, 1 N-linked glycan (1 site), 1 O-linked glycan (1 site)"/>
</dbReference>
<dbReference type="iPTMnet" id="Q61768"/>
<dbReference type="PhosphoSitePlus" id="Q61768"/>
<dbReference type="SwissPalm" id="Q61768"/>
<dbReference type="jPOST" id="Q61768"/>
<dbReference type="PaxDb" id="10090-ENSMUSP00000025083"/>
<dbReference type="PeptideAtlas" id="Q61768"/>
<dbReference type="ProteomicsDB" id="264756"/>
<dbReference type="Pumba" id="Q61768"/>
<dbReference type="Antibodypedia" id="4077">
    <property type="antibodies" value="467 antibodies from 41 providers"/>
</dbReference>
<dbReference type="DNASU" id="16573"/>
<dbReference type="Ensembl" id="ENSMUST00000025083.14">
    <property type="protein sequence ID" value="ENSMUSP00000025083.8"/>
    <property type="gene ID" value="ENSMUSG00000006740.15"/>
</dbReference>
<dbReference type="GeneID" id="16573"/>
<dbReference type="KEGG" id="mmu:16573"/>
<dbReference type="UCSC" id="uc008dzf.2">
    <property type="organism name" value="mouse"/>
</dbReference>
<dbReference type="AGR" id="MGI:1098268"/>
<dbReference type="CTD" id="3799"/>
<dbReference type="MGI" id="MGI:1098268">
    <property type="gene designation" value="Kif5b"/>
</dbReference>
<dbReference type="VEuPathDB" id="HostDB:ENSMUSG00000006740"/>
<dbReference type="eggNOG" id="KOG0240">
    <property type="taxonomic scope" value="Eukaryota"/>
</dbReference>
<dbReference type="GeneTree" id="ENSGT00940000154801"/>
<dbReference type="HOGENOM" id="CLU_001485_11_1_1"/>
<dbReference type="InParanoid" id="Q61768"/>
<dbReference type="OMA" id="FPMGTKQ"/>
<dbReference type="OrthoDB" id="3176171at2759"/>
<dbReference type="PhylomeDB" id="Q61768"/>
<dbReference type="TreeFam" id="TF105225"/>
<dbReference type="BRENDA" id="5.6.1.3">
    <property type="organism ID" value="3474"/>
</dbReference>
<dbReference type="Reactome" id="R-MMU-2132295">
    <property type="pathway name" value="MHC class II antigen presentation"/>
</dbReference>
<dbReference type="Reactome" id="R-MMU-5625970">
    <property type="pathway name" value="RHO GTPases activate KTN1"/>
</dbReference>
<dbReference type="Reactome" id="R-MMU-6811434">
    <property type="pathway name" value="COPI-dependent Golgi-to-ER retrograde traffic"/>
</dbReference>
<dbReference type="Reactome" id="R-MMU-983189">
    <property type="pathway name" value="Kinesins"/>
</dbReference>
<dbReference type="BioGRID-ORCS" id="16573">
    <property type="hits" value="3 hits in 80 CRISPR screens"/>
</dbReference>
<dbReference type="ChiTaRS" id="Kif5b">
    <property type="organism name" value="mouse"/>
</dbReference>
<dbReference type="PRO" id="PR:Q61768"/>
<dbReference type="Proteomes" id="UP000000589">
    <property type="component" value="Chromosome 18"/>
</dbReference>
<dbReference type="RNAct" id="Q61768">
    <property type="molecule type" value="protein"/>
</dbReference>
<dbReference type="Bgee" id="ENSMUSG00000006740">
    <property type="expression patterns" value="Expressed in globus pallidus and 280 other cell types or tissues"/>
</dbReference>
<dbReference type="ExpressionAtlas" id="Q61768">
    <property type="expression patterns" value="baseline and differential"/>
</dbReference>
<dbReference type="GO" id="GO:1904115">
    <property type="term" value="C:axon cytoplasm"/>
    <property type="evidence" value="ECO:0007669"/>
    <property type="project" value="GOC"/>
</dbReference>
<dbReference type="GO" id="GO:0034451">
    <property type="term" value="C:centriolar satellite"/>
    <property type="evidence" value="ECO:0007669"/>
    <property type="project" value="Ensembl"/>
</dbReference>
<dbReference type="GO" id="GO:0035253">
    <property type="term" value="C:ciliary rootlet"/>
    <property type="evidence" value="ECO:0000314"/>
    <property type="project" value="MGI"/>
</dbReference>
<dbReference type="GO" id="GO:0101004">
    <property type="term" value="C:cytolytic granule membrane"/>
    <property type="evidence" value="ECO:0007669"/>
    <property type="project" value="UniProtKB-SubCell"/>
</dbReference>
<dbReference type="GO" id="GO:0005737">
    <property type="term" value="C:cytoplasm"/>
    <property type="evidence" value="ECO:0000314"/>
    <property type="project" value="MGI"/>
</dbReference>
<dbReference type="GO" id="GO:0005829">
    <property type="term" value="C:cytosol"/>
    <property type="evidence" value="ECO:0000304"/>
    <property type="project" value="Reactome"/>
</dbReference>
<dbReference type="GO" id="GO:0030139">
    <property type="term" value="C:endocytic vesicle"/>
    <property type="evidence" value="ECO:0000314"/>
    <property type="project" value="MGI"/>
</dbReference>
<dbReference type="GO" id="GO:0005871">
    <property type="term" value="C:kinesin complex"/>
    <property type="evidence" value="ECO:0000304"/>
    <property type="project" value="MGI"/>
</dbReference>
<dbReference type="GO" id="GO:0005874">
    <property type="term" value="C:microtubule"/>
    <property type="evidence" value="ECO:0007669"/>
    <property type="project" value="UniProtKB-KW"/>
</dbReference>
<dbReference type="GO" id="GO:0005739">
    <property type="term" value="C:mitochondrion"/>
    <property type="evidence" value="ECO:0000314"/>
    <property type="project" value="MGI"/>
</dbReference>
<dbReference type="GO" id="GO:0043005">
    <property type="term" value="C:neuron projection"/>
    <property type="evidence" value="ECO:0000314"/>
    <property type="project" value="MGI"/>
</dbReference>
<dbReference type="GO" id="GO:0031965">
    <property type="term" value="C:nuclear membrane"/>
    <property type="evidence" value="ECO:0007669"/>
    <property type="project" value="Ensembl"/>
</dbReference>
<dbReference type="GO" id="GO:0048471">
    <property type="term" value="C:perinuclear region of cytoplasm"/>
    <property type="evidence" value="ECO:0000250"/>
    <property type="project" value="HGNC-UCL"/>
</dbReference>
<dbReference type="GO" id="GO:0045335">
    <property type="term" value="C:phagocytic vesicle"/>
    <property type="evidence" value="ECO:0000314"/>
    <property type="project" value="MGI"/>
</dbReference>
<dbReference type="GO" id="GO:0099524">
    <property type="term" value="C:postsynaptic cytosol"/>
    <property type="evidence" value="ECO:0000314"/>
    <property type="project" value="SynGO"/>
</dbReference>
<dbReference type="GO" id="GO:0031982">
    <property type="term" value="C:vesicle"/>
    <property type="evidence" value="ECO:0000250"/>
    <property type="project" value="UniProtKB"/>
</dbReference>
<dbReference type="GO" id="GO:0005524">
    <property type="term" value="F:ATP binding"/>
    <property type="evidence" value="ECO:0007669"/>
    <property type="project" value="UniProtKB-KW"/>
</dbReference>
<dbReference type="GO" id="GO:0042802">
    <property type="term" value="F:identical protein binding"/>
    <property type="evidence" value="ECO:0007669"/>
    <property type="project" value="Ensembl"/>
</dbReference>
<dbReference type="GO" id="GO:0008017">
    <property type="term" value="F:microtubule binding"/>
    <property type="evidence" value="ECO:0000250"/>
    <property type="project" value="HGNC-UCL"/>
</dbReference>
<dbReference type="GO" id="GO:0003777">
    <property type="term" value="F:microtubule motor activity"/>
    <property type="evidence" value="ECO:0000250"/>
    <property type="project" value="HGNC-UCL"/>
</dbReference>
<dbReference type="GO" id="GO:0044877">
    <property type="term" value="F:protein-containing complex binding"/>
    <property type="evidence" value="ECO:0000314"/>
    <property type="project" value="MGI"/>
</dbReference>
<dbReference type="GO" id="GO:0099641">
    <property type="term" value="P:anterograde axonal protein transport"/>
    <property type="evidence" value="ECO:0000250"/>
    <property type="project" value="UniProtKB"/>
</dbReference>
<dbReference type="GO" id="GO:0071346">
    <property type="term" value="P:cellular response to type II interferon"/>
    <property type="evidence" value="ECO:0000314"/>
    <property type="project" value="MGI"/>
</dbReference>
<dbReference type="GO" id="GO:0051642">
    <property type="term" value="P:centrosome localization"/>
    <property type="evidence" value="ECO:0000250"/>
    <property type="project" value="UniProtKB"/>
</dbReference>
<dbReference type="GO" id="GO:0007028">
    <property type="term" value="P:cytoplasm organization"/>
    <property type="evidence" value="ECO:0000315"/>
    <property type="project" value="MGI"/>
</dbReference>
<dbReference type="GO" id="GO:0032418">
    <property type="term" value="P:lysosome localization"/>
    <property type="evidence" value="ECO:0000250"/>
    <property type="project" value="UniProtKB"/>
</dbReference>
<dbReference type="GO" id="GO:0007017">
    <property type="term" value="P:microtubule-based process"/>
    <property type="evidence" value="ECO:0000304"/>
    <property type="project" value="MGI"/>
</dbReference>
<dbReference type="GO" id="GO:0006839">
    <property type="term" value="P:mitochondrial transport"/>
    <property type="evidence" value="ECO:0000304"/>
    <property type="project" value="MGI"/>
</dbReference>
<dbReference type="GO" id="GO:0047497">
    <property type="term" value="P:mitochondrion transport along microtubule"/>
    <property type="evidence" value="ECO:0000315"/>
    <property type="project" value="MGI"/>
</dbReference>
<dbReference type="GO" id="GO:0160040">
    <property type="term" value="P:mitocytosis"/>
    <property type="evidence" value="ECO:0000315"/>
    <property type="project" value="MGI"/>
</dbReference>
<dbReference type="GO" id="GO:0042267">
    <property type="term" value="P:natural killer cell mediated cytotoxicity"/>
    <property type="evidence" value="ECO:0000250"/>
    <property type="project" value="UniProtKB"/>
</dbReference>
<dbReference type="GO" id="GO:0072383">
    <property type="term" value="P:plus-end-directed vesicle transport along microtubule"/>
    <property type="evidence" value="ECO:0000315"/>
    <property type="project" value="MGI"/>
</dbReference>
<dbReference type="GO" id="GO:0043268">
    <property type="term" value="P:positive regulation of potassium ion transport"/>
    <property type="evidence" value="ECO:0007669"/>
    <property type="project" value="Ensembl"/>
</dbReference>
<dbReference type="GO" id="GO:1903078">
    <property type="term" value="P:positive regulation of protein localization to plasma membrane"/>
    <property type="evidence" value="ECO:0007669"/>
    <property type="project" value="Ensembl"/>
</dbReference>
<dbReference type="GO" id="GO:0032230">
    <property type="term" value="P:positive regulation of synaptic transmission, GABAergic"/>
    <property type="evidence" value="ECO:0000314"/>
    <property type="project" value="UniProtKB"/>
</dbReference>
<dbReference type="GO" id="GO:0042391">
    <property type="term" value="P:regulation of membrane potential"/>
    <property type="evidence" value="ECO:0007669"/>
    <property type="project" value="Ensembl"/>
</dbReference>
<dbReference type="GO" id="GO:0098987">
    <property type="term" value="P:regulation of modification of synapse structure, modulating synaptic transmission"/>
    <property type="evidence" value="ECO:0000314"/>
    <property type="project" value="SynGO"/>
</dbReference>
<dbReference type="GO" id="GO:0035617">
    <property type="term" value="P:stress granule disassembly"/>
    <property type="evidence" value="ECO:0000315"/>
    <property type="project" value="BHF-UCL"/>
</dbReference>
<dbReference type="GO" id="GO:0047496">
    <property type="term" value="P:vesicle transport along microtubule"/>
    <property type="evidence" value="ECO:0000316"/>
    <property type="project" value="MGI"/>
</dbReference>
<dbReference type="CDD" id="cd23649">
    <property type="entry name" value="Khc_CBD_cc"/>
    <property type="match status" value="1"/>
</dbReference>
<dbReference type="CDD" id="cd01369">
    <property type="entry name" value="KISc_KHC_KIF5"/>
    <property type="match status" value="1"/>
</dbReference>
<dbReference type="FunFam" id="3.40.850.10:FF:000009">
    <property type="entry name" value="Kinesin-like protein"/>
    <property type="match status" value="1"/>
</dbReference>
<dbReference type="Gene3D" id="6.10.250.1590">
    <property type="match status" value="1"/>
</dbReference>
<dbReference type="Gene3D" id="3.40.850.10">
    <property type="entry name" value="Kinesin motor domain"/>
    <property type="match status" value="1"/>
</dbReference>
<dbReference type="InterPro" id="IPR027640">
    <property type="entry name" value="Kinesin-like_fam"/>
</dbReference>
<dbReference type="InterPro" id="IPR019821">
    <property type="entry name" value="Kinesin_motor_CS"/>
</dbReference>
<dbReference type="InterPro" id="IPR001752">
    <property type="entry name" value="Kinesin_motor_dom"/>
</dbReference>
<dbReference type="InterPro" id="IPR036961">
    <property type="entry name" value="Kinesin_motor_dom_sf"/>
</dbReference>
<dbReference type="InterPro" id="IPR027417">
    <property type="entry name" value="P-loop_NTPase"/>
</dbReference>
<dbReference type="PANTHER" id="PTHR47968">
    <property type="entry name" value="CENTROMERE PROTEIN E"/>
    <property type="match status" value="1"/>
</dbReference>
<dbReference type="PANTHER" id="PTHR47968:SF68">
    <property type="entry name" value="KINESIN-LIKE PROTEIN"/>
    <property type="match status" value="1"/>
</dbReference>
<dbReference type="Pfam" id="PF00225">
    <property type="entry name" value="Kinesin"/>
    <property type="match status" value="1"/>
</dbReference>
<dbReference type="PRINTS" id="PR00380">
    <property type="entry name" value="KINESINHEAVY"/>
</dbReference>
<dbReference type="SMART" id="SM00129">
    <property type="entry name" value="KISc"/>
    <property type="match status" value="1"/>
</dbReference>
<dbReference type="SUPFAM" id="SSF52540">
    <property type="entry name" value="P-loop containing nucleoside triphosphate hydrolases"/>
    <property type="match status" value="1"/>
</dbReference>
<dbReference type="PROSITE" id="PS00411">
    <property type="entry name" value="KINESIN_MOTOR_1"/>
    <property type="match status" value="1"/>
</dbReference>
<dbReference type="PROSITE" id="PS50067">
    <property type="entry name" value="KINESIN_MOTOR_2"/>
    <property type="match status" value="1"/>
</dbReference>
<reference key="1">
    <citation type="journal article" date="1997" name="Endocrinology">
        <title>Suppression of the expression of a pancreatic beta-cell form of the kinesin heavy chain by antisense oligonucleotides inhibits insulin secretion from primary cultures of mouse beta-cells.</title>
        <authorList>
            <person name="Meng Y.X."/>
            <person name="Wilson G.W."/>
            <person name="Avery M.C."/>
            <person name="Varden C.H."/>
            <person name="Balczon R."/>
        </authorList>
    </citation>
    <scope>NUCLEOTIDE SEQUENCE [MRNA]</scope>
    <source>
        <tissue>Pancreas</tissue>
    </source>
</reference>
<reference key="2">
    <citation type="journal article" date="2004" name="Genome Res.">
        <title>The status, quality, and expansion of the NIH full-length cDNA project: the Mammalian Gene Collection (MGC).</title>
        <authorList>
            <consortium name="The MGC Project Team"/>
        </authorList>
    </citation>
    <scope>NUCLEOTIDE SEQUENCE [LARGE SCALE MRNA]</scope>
    <source>
        <strain>C57BL/6J</strain>
        <tissue>Brain</tissue>
    </source>
</reference>
<reference key="3">
    <citation type="journal article" date="1994" name="Proc. Natl. Acad. Sci. U.S.A.">
        <title>Cloning mammalian genes by expression selection of genetic suppressor elements: association of kinesin with drug resistance and cell immortalization.</title>
        <authorList>
            <person name="Gudkov A.V."/>
            <person name="Kazarov A.R."/>
            <person name="Thimmapaya R."/>
            <person name="Axenovich S.A."/>
            <person name="Mazo I.A."/>
            <person name="Roninson I.B."/>
        </authorList>
    </citation>
    <scope>NUCLEOTIDE SEQUENCE [MRNA] OF 1-881</scope>
    <source>
        <strain>BALB/cJ</strain>
    </source>
</reference>
<reference key="4">
    <citation type="submission" date="2009-01" db="UniProtKB">
        <authorList>
            <person name="Lubec G."/>
            <person name="Sunyer B."/>
            <person name="Chen W.-Q."/>
        </authorList>
    </citation>
    <scope>PROTEIN SEQUENCE OF 132-141 AND 490-505</scope>
    <scope>IDENTIFICATION BY MASS SPECTROMETRY</scope>
    <source>
        <strain>OF1</strain>
        <tissue>Hippocampus</tissue>
    </source>
</reference>
<reference key="5">
    <citation type="journal article" date="1998" name="Cell">
        <title>Targeted disruption of mouse conventional kinesin heavy chain, kif5B, results in abnormal perinuclear clustering of mitochondria.</title>
        <authorList>
            <person name="Tanaka Y."/>
            <person name="Kanai Y."/>
            <person name="Okada Y."/>
            <person name="Nonaka S."/>
            <person name="Takeda S."/>
            <person name="Harada A."/>
            <person name="Hirokawa N."/>
        </authorList>
    </citation>
    <scope>FUNCTION</scope>
    <scope>DISRUPTION PHENOTYPE</scope>
</reference>
<reference key="6">
    <citation type="journal article" date="2002" name="Nature">
        <title>Glutamate-receptor-interacting protein GRIP1 directly steers kinesin to dendrites.</title>
        <authorList>
            <person name="Setou M."/>
            <person name="Seog D.-H."/>
            <person name="Tanaka Y."/>
            <person name="Kanai Y."/>
            <person name="Takei Y."/>
            <person name="Kawagishi M."/>
            <person name="Hirokawa N."/>
        </authorList>
    </citation>
    <scope>INTERACTION WITH GRIP1</scope>
</reference>
<reference key="7">
    <citation type="journal article" date="2007" name="Mol. Cell. Neurosci.">
        <title>Marlin-1 and conventional kinesin link GABAB receptors to the cytoskeleton and regulate receptor transport.</title>
        <authorList>
            <person name="Vidal R.L."/>
            <person name="Ramirez O.A."/>
            <person name="Sandoval L."/>
            <person name="Koenig-Robert R."/>
            <person name="Haertel S."/>
            <person name="Couve A."/>
        </authorList>
    </citation>
    <scope>INTERACTION WITH JAKMIP1</scope>
</reference>
<reference key="8">
    <citation type="journal article" date="2007" name="Proc. Natl. Acad. Sci. U.S.A.">
        <title>Large-scale phosphorylation analysis of mouse liver.</title>
        <authorList>
            <person name="Villen J."/>
            <person name="Beausoleil S.A."/>
            <person name="Gerber S.A."/>
            <person name="Gygi S.P."/>
        </authorList>
    </citation>
    <scope>PHOSPHORYLATION [LARGE SCALE ANALYSIS] AT SER-945</scope>
    <scope>IDENTIFICATION BY MASS SPECTROMETRY [LARGE SCALE ANALYSIS]</scope>
    <source>
        <tissue>Liver</tissue>
    </source>
</reference>
<reference key="9">
    <citation type="journal article" date="2010" name="Biol. Cell">
        <title>TLRR (lrrc67) interacts with PP1 and is associated with a cytoskeletal complex in the testis.</title>
        <authorList>
            <person name="Wang R."/>
            <person name="Kaul A."/>
            <person name="Sperry A.O."/>
        </authorList>
    </citation>
    <scope>INTERACTION WITH PPP1R42</scope>
</reference>
<reference key="10">
    <citation type="journal article" date="2010" name="Cell">
        <title>A tissue-specific atlas of mouse protein phosphorylation and expression.</title>
        <authorList>
            <person name="Huttlin E.L."/>
            <person name="Jedrychowski M.P."/>
            <person name="Elias J.E."/>
            <person name="Goswami T."/>
            <person name="Rad R."/>
            <person name="Beausoleil S.A."/>
            <person name="Villen J."/>
            <person name="Haas W."/>
            <person name="Sowa M.E."/>
            <person name="Gygi S.P."/>
        </authorList>
    </citation>
    <scope>PHOSPHORYLATION [LARGE SCALE ANALYSIS] AT SER-945</scope>
    <scope>IDENTIFICATION BY MASS SPECTROMETRY [LARGE SCALE ANALYSIS]</scope>
    <source>
        <tissue>Brain</tissue>
        <tissue>Brown adipose tissue</tissue>
        <tissue>Heart</tissue>
        <tissue>Kidney</tissue>
        <tissue>Liver</tissue>
        <tissue>Lung</tissue>
        <tissue>Pancreas</tissue>
        <tissue>Spleen</tissue>
        <tissue>Testis</tissue>
    </source>
</reference>
<reference key="11">
    <citation type="journal article" date="2011" name="Mol. Biol. Cell">
        <title>Protrudin serves as an adaptor molecule that connects KIF5 and its cargoes in vesicular transport during process formation.</title>
        <authorList>
            <person name="Matsuzaki F."/>
            <person name="Shirane M."/>
            <person name="Matsumoto M."/>
            <person name="Nakayama K.I."/>
        </authorList>
    </citation>
    <scope>FUNCTION</scope>
    <scope>INTERACTION WITH ZFYVE27</scope>
</reference>
<reference key="12">
    <citation type="journal article" date="2014" name="Mol. Cell. Proteomics">
        <title>Immunoaffinity enrichment and mass spectrometry analysis of protein methylation.</title>
        <authorList>
            <person name="Guo A."/>
            <person name="Gu H."/>
            <person name="Zhou J."/>
            <person name="Mulhern D."/>
            <person name="Wang Y."/>
            <person name="Lee K.A."/>
            <person name="Yang V."/>
            <person name="Aguiar M."/>
            <person name="Kornhauser J."/>
            <person name="Jia X."/>
            <person name="Ren J."/>
            <person name="Beausoleil S.A."/>
            <person name="Silva J.C."/>
            <person name="Vemulapalli V."/>
            <person name="Bedford M.T."/>
            <person name="Comb M.J."/>
        </authorList>
    </citation>
    <scope>METHYLATION [LARGE SCALE ANALYSIS] AT ARG-956</scope>
    <scope>IDENTIFICATION BY MASS SPECTROMETRY [LARGE SCALE ANALYSIS]</scope>
    <source>
        <tissue>Brain</tissue>
        <tissue>Embryo</tissue>
    </source>
</reference>
<keyword id="KW-0002">3D-structure</keyword>
<keyword id="KW-0007">Acetylation</keyword>
<keyword id="KW-0067">ATP-binding</keyword>
<keyword id="KW-0175">Coiled coil</keyword>
<keyword id="KW-0963">Cytoplasm</keyword>
<keyword id="KW-0206">Cytoskeleton</keyword>
<keyword id="KW-0903">Direct protein sequencing</keyword>
<keyword id="KW-1017">Isopeptide bond</keyword>
<keyword id="KW-0458">Lysosome</keyword>
<keyword id="KW-0472">Membrane</keyword>
<keyword id="KW-0488">Methylation</keyword>
<keyword id="KW-0493">Microtubule</keyword>
<keyword id="KW-0505">Motor protein</keyword>
<keyword id="KW-0547">Nucleotide-binding</keyword>
<keyword id="KW-0597">Phosphoprotein</keyword>
<keyword id="KW-1185">Reference proteome</keyword>
<keyword id="KW-0832">Ubl conjugation</keyword>
<comment type="function">
    <text evidence="1 2 8 9">Microtubule-dependent motor required for normal distribution of mitochondria and lysosomes. May be involved in the mechanisms of growth arrest induced by exposure to DNA-damaging drugs or by cellular senescence (PubMed:9657148). Can induce formation of neurite-like membrane protrusions in non-neuronal cells in a ZFYVE27-dependent manner (PubMed:21976701). Regulates centrosome and nuclear positioning during mitotic entry. During the G2 phase of the cell cycle in a BICD2-dependent manner, antagonizes dynein function and drives the separation of nuclei and centrosomes. Required for anterograde axonal transportation of MAPK8IP3/JIP3 which is essential for MAPK8IP3/JIP3 function in axon elongation (By similarity). Through binding with PLEKHM2 and ARL8B, directs lysosome movement toward microtubule plus ends. Involved in NK cell-mediated cytotoxicity. Drives the polarization of cytolytic granules and microtubule-organizing centers (MTOCs) toward the immune synapse between effector NK lymphocytes and target cells (By similarity).</text>
</comment>
<comment type="subunit">
    <text evidence="1 2 5 6 7 8">Oligomer composed of two heavy chains and two light chains. Interacts with GRIP1 and PPP1R42 (PubMed:11986669, PubMed:19886865). Interacts with SYBU (By similarity). Interacts with JAKMIP1 (PubMed:17532644). Interacts with PLEKHM2. Interacts with ECPAS (By similarity). Interacts with ZFYVE27 (PubMed:21976701). Found in a complex with OGT, RHOT1, RHOT2 and TRAK1 (By similarity). Interacts with APP (via cytoplasmic domain) (By similarity).</text>
</comment>
<comment type="interaction">
    <interactant intactId="EBI-776129">
        <id>Q61768</id>
    </interactant>
    <interactant intactId="EBI-492834">
        <id>O88485</id>
        <label>Dync1i1</label>
    </interactant>
    <organismsDiffer>false</organismsDiffer>
    <experiments>4</experiments>
</comment>
<comment type="interaction">
    <interactant intactId="EBI-776129">
        <id>Q61768</id>
    </interactant>
    <interactant intactId="EBI-911192">
        <id>O35685</id>
        <label>Nudc</label>
    </interactant>
    <organismsDiffer>false</organismsDiffer>
    <experiments>4</experiments>
</comment>
<comment type="subcellular location">
    <subcellularLocation>
        <location evidence="2">Cytoplasm</location>
        <location evidence="2">Cytoskeleton</location>
    </subcellularLocation>
    <subcellularLocation>
        <location evidence="1">Cytolytic granule membrane</location>
    </subcellularLocation>
    <subcellularLocation>
        <location evidence="1">Lysosome membrane</location>
        <topology evidence="1">Peripheral membrane protein</topology>
        <orientation evidence="1">Cytoplasmic side</orientation>
    </subcellularLocation>
    <text evidence="2">Uniformly distributed between soma and neurites in hippocampal neurons.</text>
</comment>
<comment type="domain">
    <text>Composed of three structural domains: a large globular N-terminal domain which is responsible for the motor activity of kinesin (it hydrolyzes ATP and binds microtubule), a central alpha-helical coiled coil domain that mediates the heavy chain dimerization; and a small globular C-terminal domain which interacts with other proteins (such as the kinesin light chains), vesicles and membranous organelles.</text>
</comment>
<comment type="disruption phenotype">
    <text evidence="9">Mice are embryonic lethal. They show perinuclear clustering of mitochondria and impaired lysosomal dispersion.</text>
</comment>
<comment type="similarity">
    <text evidence="3">Belongs to the TRAFAC class myosin-kinesin ATPase superfamily. Kinesin family. Kinesin subfamily.</text>
</comment>
<accession>Q61768</accession>
<accession>O08711</accession>
<accession>Q5BL10</accession>
<accession>Q61580</accession>
<gene>
    <name type="primary">Kif5b</name>
    <name type="synonym">Khcs</name>
    <name type="synonym">Kns1</name>
</gene>